<comment type="function">
    <text evidence="1">IGPS catalyzes the conversion of PRFAR and glutamine to IGP, AICAR and glutamate. The HisF subunit catalyzes the cyclization activity that produces IGP and AICAR from PRFAR using the ammonia provided by the HisH subunit.</text>
</comment>
<comment type="catalytic activity">
    <reaction evidence="1">
        <text>5-[(5-phospho-1-deoxy-D-ribulos-1-ylimino)methylamino]-1-(5-phospho-beta-D-ribosyl)imidazole-4-carboxamide + L-glutamine = D-erythro-1-(imidazol-4-yl)glycerol 3-phosphate + 5-amino-1-(5-phospho-beta-D-ribosyl)imidazole-4-carboxamide + L-glutamate + H(+)</text>
        <dbReference type="Rhea" id="RHEA:24793"/>
        <dbReference type="ChEBI" id="CHEBI:15378"/>
        <dbReference type="ChEBI" id="CHEBI:29985"/>
        <dbReference type="ChEBI" id="CHEBI:58278"/>
        <dbReference type="ChEBI" id="CHEBI:58359"/>
        <dbReference type="ChEBI" id="CHEBI:58475"/>
        <dbReference type="ChEBI" id="CHEBI:58525"/>
        <dbReference type="EC" id="4.3.2.10"/>
    </reaction>
</comment>
<comment type="pathway">
    <text evidence="1">Amino-acid biosynthesis; L-histidine biosynthesis; L-histidine from 5-phospho-alpha-D-ribose 1-diphosphate: step 5/9.</text>
</comment>
<comment type="subunit">
    <text evidence="1">Heterodimer of HisH and HisF.</text>
</comment>
<comment type="subcellular location">
    <subcellularLocation>
        <location evidence="1">Cytoplasm</location>
    </subcellularLocation>
</comment>
<comment type="similarity">
    <text evidence="1">Belongs to the HisA/HisF family.</text>
</comment>
<evidence type="ECO:0000255" key="1">
    <source>
        <dbReference type="HAMAP-Rule" id="MF_01013"/>
    </source>
</evidence>
<proteinExistence type="inferred from homology"/>
<protein>
    <recommendedName>
        <fullName evidence="1">Imidazole glycerol phosphate synthase subunit HisF</fullName>
        <ecNumber evidence="1">4.3.2.10</ecNumber>
    </recommendedName>
    <alternativeName>
        <fullName evidence="1">IGP synthase cyclase subunit</fullName>
    </alternativeName>
    <alternativeName>
        <fullName evidence="1">IGP synthase subunit HisF</fullName>
    </alternativeName>
    <alternativeName>
        <fullName evidence="1">ImGP synthase subunit HisF</fullName>
        <shortName evidence="1">IGPS subunit HisF</shortName>
    </alternativeName>
</protein>
<feature type="chain" id="PRO_1000148937" description="Imidazole glycerol phosphate synthase subunit HisF">
    <location>
        <begin position="1"/>
        <end position="253"/>
    </location>
</feature>
<feature type="active site" evidence="1">
    <location>
        <position position="11"/>
    </location>
</feature>
<feature type="active site" evidence="1">
    <location>
        <position position="130"/>
    </location>
</feature>
<sequence>MLKTRIIPCLDVADGRVVKGVNFVDLRDAGDPVEAARAYDAAGADELCFLDIHATHENRGTMYDLVTRTAEQCFMPLTVGGGVRTHQDVRALLLAGADKVSFNSAAVADPTVVAEAADRFGSQCIVVAIDAKTVAPGRWEIFTHGGRRATGIDAVEFACDVASRGAGEILLTSMDRDGTRAGFNLPLTRAISEAVPIPVIASGGVGTLDHLVEGVTEGGASAVLAASIFHFGEFTIGEAKAHMATAGIPVRLA</sequence>
<dbReference type="EC" id="4.3.2.10" evidence="1"/>
<dbReference type="EMBL" id="CP001150">
    <property type="protein sequence ID" value="ACM00421.1"/>
    <property type="molecule type" value="Genomic_DNA"/>
</dbReference>
<dbReference type="RefSeq" id="WP_012643805.1">
    <property type="nucleotide sequence ID" value="NC_011963.1"/>
</dbReference>
<dbReference type="SMR" id="B9KPC8"/>
<dbReference type="GeneID" id="67446014"/>
<dbReference type="KEGG" id="rsk:RSKD131_0561"/>
<dbReference type="HOGENOM" id="CLU_048577_4_0_5"/>
<dbReference type="UniPathway" id="UPA00031">
    <property type="reaction ID" value="UER00010"/>
</dbReference>
<dbReference type="GO" id="GO:0005737">
    <property type="term" value="C:cytoplasm"/>
    <property type="evidence" value="ECO:0007669"/>
    <property type="project" value="UniProtKB-SubCell"/>
</dbReference>
<dbReference type="GO" id="GO:0000107">
    <property type="term" value="F:imidazoleglycerol-phosphate synthase activity"/>
    <property type="evidence" value="ECO:0007669"/>
    <property type="project" value="UniProtKB-UniRule"/>
</dbReference>
<dbReference type="GO" id="GO:0016829">
    <property type="term" value="F:lyase activity"/>
    <property type="evidence" value="ECO:0007669"/>
    <property type="project" value="UniProtKB-KW"/>
</dbReference>
<dbReference type="GO" id="GO:0000105">
    <property type="term" value="P:L-histidine biosynthetic process"/>
    <property type="evidence" value="ECO:0007669"/>
    <property type="project" value="UniProtKB-UniRule"/>
</dbReference>
<dbReference type="CDD" id="cd04731">
    <property type="entry name" value="HisF"/>
    <property type="match status" value="1"/>
</dbReference>
<dbReference type="FunFam" id="3.20.20.70:FF:000006">
    <property type="entry name" value="Imidazole glycerol phosphate synthase subunit HisF"/>
    <property type="match status" value="1"/>
</dbReference>
<dbReference type="Gene3D" id="3.20.20.70">
    <property type="entry name" value="Aldolase class I"/>
    <property type="match status" value="1"/>
</dbReference>
<dbReference type="HAMAP" id="MF_01013">
    <property type="entry name" value="HisF"/>
    <property type="match status" value="1"/>
</dbReference>
<dbReference type="InterPro" id="IPR013785">
    <property type="entry name" value="Aldolase_TIM"/>
</dbReference>
<dbReference type="InterPro" id="IPR006062">
    <property type="entry name" value="His_biosynth"/>
</dbReference>
<dbReference type="InterPro" id="IPR004651">
    <property type="entry name" value="HisF"/>
</dbReference>
<dbReference type="InterPro" id="IPR050064">
    <property type="entry name" value="IGPS_HisA/HisF"/>
</dbReference>
<dbReference type="InterPro" id="IPR011060">
    <property type="entry name" value="RibuloseP-bd_barrel"/>
</dbReference>
<dbReference type="NCBIfam" id="TIGR00735">
    <property type="entry name" value="hisF"/>
    <property type="match status" value="1"/>
</dbReference>
<dbReference type="PANTHER" id="PTHR21235:SF2">
    <property type="entry name" value="IMIDAZOLE GLYCEROL PHOSPHATE SYNTHASE HISHF"/>
    <property type="match status" value="1"/>
</dbReference>
<dbReference type="PANTHER" id="PTHR21235">
    <property type="entry name" value="IMIDAZOLE GLYCEROL PHOSPHATE SYNTHASE SUBUNIT HISF/H IGP SYNTHASE SUBUNIT HISF/H"/>
    <property type="match status" value="1"/>
</dbReference>
<dbReference type="Pfam" id="PF00977">
    <property type="entry name" value="His_biosynth"/>
    <property type="match status" value="1"/>
</dbReference>
<dbReference type="SUPFAM" id="SSF51366">
    <property type="entry name" value="Ribulose-phoshate binding barrel"/>
    <property type="match status" value="1"/>
</dbReference>
<accession>B9KPC8</accession>
<name>HIS6_CERSK</name>
<keyword id="KW-0028">Amino-acid biosynthesis</keyword>
<keyword id="KW-0963">Cytoplasm</keyword>
<keyword id="KW-0368">Histidine biosynthesis</keyword>
<keyword id="KW-0456">Lyase</keyword>
<gene>
    <name evidence="1" type="primary">hisF</name>
    <name type="ordered locus">RSKD131_0561</name>
</gene>
<reference key="1">
    <citation type="journal article" date="2009" name="J. Bacteriol.">
        <title>Complete genome sequence of Rhodobacter sphaeroides KD131.</title>
        <authorList>
            <person name="Lim S.-K."/>
            <person name="Kim S.J."/>
            <person name="Cha S.H."/>
            <person name="Oh Y.-K."/>
            <person name="Rhee H.-J."/>
            <person name="Kim M.-S."/>
            <person name="Lee J.K."/>
        </authorList>
    </citation>
    <scope>NUCLEOTIDE SEQUENCE [LARGE SCALE GENOMIC DNA]</scope>
    <source>
        <strain>KD131 / KCTC 12085</strain>
    </source>
</reference>
<organism>
    <name type="scientific">Cereibacter sphaeroides (strain KD131 / KCTC 12085)</name>
    <name type="common">Rhodobacter sphaeroides</name>
    <dbReference type="NCBI Taxonomy" id="557760"/>
    <lineage>
        <taxon>Bacteria</taxon>
        <taxon>Pseudomonadati</taxon>
        <taxon>Pseudomonadota</taxon>
        <taxon>Alphaproteobacteria</taxon>
        <taxon>Rhodobacterales</taxon>
        <taxon>Paracoccaceae</taxon>
        <taxon>Cereibacter</taxon>
    </lineage>
</organism>